<protein>
    <recommendedName>
        <fullName>Trimethylamine methyltransferase MttB2</fullName>
        <shortName>TMA methyltransferase 2</shortName>
        <ecNumber>2.1.1.250</ecNumber>
    </recommendedName>
    <alternativeName>
        <fullName>Trimethylamine--corrinoid protein methyltransferase 2</fullName>
    </alternativeName>
</protein>
<feature type="chain" id="PRO_0000216575" description="Trimethylamine methyltransferase MttB2">
    <location>
        <begin position="1"/>
        <end position="495"/>
    </location>
</feature>
<feature type="non-standard amino acid" description="Pyrrolysine" evidence="1">
    <location>
        <position position="334"/>
    </location>
</feature>
<accession>P58974</accession>
<name>MTTB2_METMA</name>
<proteinExistence type="inferred from homology"/>
<organism>
    <name type="scientific">Methanosarcina mazei (strain ATCC BAA-159 / DSM 3647 / Goe1 / Go1 / JCM 11833 / OCM 88)</name>
    <name type="common">Methanosarcina frisia</name>
    <dbReference type="NCBI Taxonomy" id="192952"/>
    <lineage>
        <taxon>Archaea</taxon>
        <taxon>Methanobacteriati</taxon>
        <taxon>Methanobacteriota</taxon>
        <taxon>Stenosarchaea group</taxon>
        <taxon>Methanomicrobia</taxon>
        <taxon>Methanosarcinales</taxon>
        <taxon>Methanosarcinaceae</taxon>
        <taxon>Methanosarcina</taxon>
    </lineage>
</organism>
<reference key="1">
    <citation type="journal article" date="2002" name="J. Mol. Microbiol. Biotechnol.">
        <title>The genome of Methanosarcina mazei: evidence for lateral gene transfer between Bacteria and Archaea.</title>
        <authorList>
            <person name="Deppenmeier U."/>
            <person name="Johann A."/>
            <person name="Hartsch T."/>
            <person name="Merkl R."/>
            <person name="Schmitz R.A."/>
            <person name="Martinez-Arias R."/>
            <person name="Henne A."/>
            <person name="Wiezer A."/>
            <person name="Baeumer S."/>
            <person name="Jacobi C."/>
            <person name="Brueggemann H."/>
            <person name="Lienard T."/>
            <person name="Christmann A."/>
            <person name="Boemecke M."/>
            <person name="Steckel S."/>
            <person name="Bhattacharyya A."/>
            <person name="Lykidis A."/>
            <person name="Overbeek R."/>
            <person name="Klenk H.-P."/>
            <person name="Gunsalus R.P."/>
            <person name="Fritz H.-J."/>
            <person name="Gottschalk G."/>
        </authorList>
    </citation>
    <scope>NUCLEOTIDE SEQUENCE [LARGE SCALE GENOMIC DNA]</scope>
    <source>
        <strain>ATCC BAA-159 / DSM 3647 / Goe1 / Go1 / JCM 11833 / OCM 88</strain>
    </source>
</reference>
<comment type="function">
    <text evidence="1">Catalyzes the transfer of a methyl group from trimethylamine to the corrinoid cofactor of MttC.</text>
</comment>
<comment type="catalytic activity">
    <reaction>
        <text>Co(I)-[trimethylamine-specific corrinoid protein] + trimethylamine + H(+) = methyl-Co(III)-[trimethylamine-specific corrinoid protein] + dimethylamine</text>
        <dbReference type="Rhea" id="RHEA:39287"/>
        <dbReference type="Rhea" id="RHEA-COMP:11124"/>
        <dbReference type="Rhea" id="RHEA-COMP:11126"/>
        <dbReference type="ChEBI" id="CHEBI:15378"/>
        <dbReference type="ChEBI" id="CHEBI:58040"/>
        <dbReference type="ChEBI" id="CHEBI:58389"/>
        <dbReference type="ChEBI" id="CHEBI:85033"/>
        <dbReference type="ChEBI" id="CHEBI:85035"/>
        <dbReference type="EC" id="2.1.1.250"/>
    </reaction>
</comment>
<comment type="pathway">
    <text>One-carbon metabolism; methanogenesis from trimethylamine.</text>
</comment>
<comment type="subunit">
    <text evidence="1">Can form a complex with MttC.</text>
</comment>
<comment type="similarity">
    <text evidence="2">Belongs to the trimethylamine methyltransferase family.</text>
</comment>
<comment type="sequence caution" evidence="2">
    <conflict type="erroneous termination">
        <sequence resource="EMBL-CDS" id="AAM31744"/>
    </conflict>
    <text>Truncated C-terminus.</text>
</comment>
<comment type="sequence caution" evidence="2">
    <conflict type="erroneous termination">
        <sequence resource="EMBL-CDS" id="AAM31745"/>
    </conflict>
    <text>Truncated C-terminus.</text>
</comment>
<gene>
    <name type="primary">mttB2</name>
    <name type="ordered locus">MM_2048/MM_2049</name>
</gene>
<dbReference type="EC" id="2.1.1.250"/>
<dbReference type="EMBL" id="AE008384">
    <property type="protein sequence ID" value="AAM31744.1"/>
    <property type="status" value="ALT_SEQ"/>
    <property type="molecule type" value="Genomic_DNA"/>
</dbReference>
<dbReference type="EMBL" id="AE008384">
    <property type="protein sequence ID" value="AAM31745.1"/>
    <property type="status" value="ALT_SEQ"/>
    <property type="molecule type" value="Genomic_DNA"/>
</dbReference>
<dbReference type="KEGG" id="mma:MM_2048"/>
<dbReference type="KEGG" id="mma:MM_2049"/>
<dbReference type="PATRIC" id="fig|192952.21.peg.2351"/>
<dbReference type="eggNOG" id="arCOG03406">
    <property type="taxonomic scope" value="Archaea"/>
</dbReference>
<dbReference type="HOGENOM" id="CLU_149838_0_0_2"/>
<dbReference type="BRENDA" id="2.1.1.250">
    <property type="organism ID" value="3270"/>
</dbReference>
<dbReference type="UniPathway" id="UPA00645"/>
<dbReference type="Proteomes" id="UP000000595">
    <property type="component" value="Chromosome"/>
</dbReference>
<dbReference type="GO" id="GO:0043834">
    <property type="term" value="F:trimethylamine methyltransferase activity"/>
    <property type="evidence" value="ECO:0007669"/>
    <property type="project" value="UniProtKB-EC"/>
</dbReference>
<dbReference type="GO" id="GO:0015948">
    <property type="term" value="P:methanogenesis"/>
    <property type="evidence" value="ECO:0007669"/>
    <property type="project" value="UniProtKB-KW"/>
</dbReference>
<dbReference type="GO" id="GO:0032259">
    <property type="term" value="P:methylation"/>
    <property type="evidence" value="ECO:0007669"/>
    <property type="project" value="UniProtKB-KW"/>
</dbReference>
<dbReference type="Gene3D" id="3.20.20.480">
    <property type="entry name" value="Trimethylamine methyltransferase-like"/>
    <property type="match status" value="1"/>
</dbReference>
<dbReference type="InterPro" id="IPR038601">
    <property type="entry name" value="MttB-like_sf"/>
</dbReference>
<dbReference type="InterPro" id="IPR012740">
    <property type="entry name" value="MttB_Methanosar"/>
</dbReference>
<dbReference type="InterPro" id="IPR010426">
    <property type="entry name" value="MTTB_MeTrfase"/>
</dbReference>
<dbReference type="NCBIfam" id="TIGR02369">
    <property type="entry name" value="trimeth_pyl"/>
    <property type="match status" value="1"/>
</dbReference>
<dbReference type="Pfam" id="PF06253">
    <property type="entry name" value="MTTB"/>
    <property type="match status" value="1"/>
</dbReference>
<dbReference type="PIRSF" id="PIRSF037567">
    <property type="entry name" value="MTTB_MeTrfase"/>
    <property type="match status" value="1"/>
</dbReference>
<evidence type="ECO:0000250" key="1"/>
<evidence type="ECO:0000305" key="2"/>
<keyword id="KW-0484">Methanogenesis</keyword>
<keyword id="KW-0489">Methyltransferase</keyword>
<keyword id="KW-0669">Pyrrolysine</keyword>
<keyword id="KW-0808">Transferase</keyword>
<sequence length="495" mass="53910">MAQNNAVAGFNALNGVELSLFTTDELKAIHYATMEVLMNPGVQVSDPEARQIFKENGCEVDEKTSIVKIPEYLVRRALQLAPSRFVLWGRDKKYNTVQEAGGKVHWTCFGTGVKMCKYQDGKYVTVDSVEQDIADIAKLCDWAENIDYFSLPVSARDWAGKGAQDVHETLTPIANTAKHYHHIDPVGEHVDYYRDIVKAYYGGDEEEARKKPIFSMLLCPTSPLELSVNACQVIIRGARFGMPVNVLSMAMSGGSSPVYLAGTLVTHNAEVLSGIVLAQLTVPGAKVWYGSSTTTFDLKKGTAPVGSPELGLISAAVAKLAQFYGLPSYVAGTOSDAKIPDNQAGHEKTMTCLLPALAGANTIYGAGMLELGMTFSMEQLVIDNDIIKMVKKAMQGIPVSPETLAVESIQKVGIGNNFLALKQTRMLVDYPSSPMLIDRRMFGDWAASGSKDLAAVANEKVQDILKNHQVPPVDADILKDMQAIVDKADRAFKEG</sequence>